<gene>
    <name type="primary">Rad54l2</name>
    <name type="synonym">Arip4</name>
    <name type="synonym">Srisnf2l</name>
</gene>
<organism>
    <name type="scientific">Mus musculus</name>
    <name type="common">Mouse</name>
    <dbReference type="NCBI Taxonomy" id="10090"/>
    <lineage>
        <taxon>Eukaryota</taxon>
        <taxon>Metazoa</taxon>
        <taxon>Chordata</taxon>
        <taxon>Craniata</taxon>
        <taxon>Vertebrata</taxon>
        <taxon>Euteleostomi</taxon>
        <taxon>Mammalia</taxon>
        <taxon>Eutheria</taxon>
        <taxon>Euarchontoglires</taxon>
        <taxon>Glires</taxon>
        <taxon>Rodentia</taxon>
        <taxon>Myomorpha</taxon>
        <taxon>Muroidea</taxon>
        <taxon>Muridae</taxon>
        <taxon>Murinae</taxon>
        <taxon>Mus</taxon>
        <taxon>Mus</taxon>
    </lineage>
</organism>
<comment type="function">
    <text evidence="6 8">DNA helicase that modulates androgen receptor (AR)-dependent transactivation in a promoter-dependent manner. Not able to remodel mononucleosomes in vitro. Acts as an AR-coregulator in Sertoli cells.</text>
</comment>
<comment type="catalytic activity">
    <reaction>
        <text>ATP + H2O = ADP + phosphate + H(+)</text>
        <dbReference type="Rhea" id="RHEA:13065"/>
        <dbReference type="ChEBI" id="CHEBI:15377"/>
        <dbReference type="ChEBI" id="CHEBI:15378"/>
        <dbReference type="ChEBI" id="CHEBI:30616"/>
        <dbReference type="ChEBI" id="CHEBI:43474"/>
        <dbReference type="ChEBI" id="CHEBI:456216"/>
        <dbReference type="EC" id="3.6.4.12"/>
    </reaction>
</comment>
<comment type="activity regulation">
    <text evidence="8">Enzyme activity is enhanced by dsDNA (double-stranded DNA) and ssDNA (single-stranded DNA).</text>
</comment>
<comment type="biophysicochemical properties">
    <kinetics>
        <KM evidence="8">40 nM for DNA</KM>
        <KM evidence="8">25 uM for ATP</KM>
    </kinetics>
</comment>
<comment type="subunit">
    <text evidence="6 7 8">Interacts with AR via its N-terminus. Interacts with DYRK1A. Binds DNA and mononucleosomes, but does not seem to form large multiprotein complexes.</text>
</comment>
<comment type="subcellular location">
    <subcellularLocation>
        <location evidence="6 7">Nucleus</location>
    </subcellularLocation>
    <text>Localizes in speckle-like nuclear compartments.</text>
</comment>
<comment type="tissue specificity">
    <text evidence="7 9">Expressed at relatively low level, with highest expression in testis, liver and kidney. In brain, it is expressed in hippocampal and cerebellar neurons. In testis, it is present at high level in Sertoli cell nuclei. Also present in Leydig cell (at protein level).</text>
</comment>
<comment type="developmental stage">
    <text evidence="9 10">Mainly expressed in the neural tube and limb buds during early embryonic development. Also present in testis: at the onset of spermatogenesis, it is expressed in spermatogonia, pachytene, and diplotene spermatocytes. In Sertoli cells it is expressed in a stage-dependent manner, with high expression levels at stages II-VI and VII-VIII.</text>
</comment>
<comment type="domain">
    <text evidence="1">Leu-Xaa-Xaa-Leu-Leu (LXXLL) motifs are known to be important for the association with nuclear receptors.</text>
</comment>
<comment type="PTM">
    <text evidence="8">Sumoylated.</text>
</comment>
<comment type="disruption phenotype">
    <text evidence="10">Death by 11.5 dpc. At 9.5 dpc and 10.5 dpc, almost all major tissues are proportionally smaller, and the neural tube is shrunk in some embryos. Dramatically reduced cell proliferation and increased apoptosis are observed in 9.5 dpc and 10.5 dpc embryos. Embryonic fibroblasts stop to grow after 2 or 3 passages and exhibit increased apoptosis and decreased DNA synthesis compared with wild-type.</text>
</comment>
<comment type="similarity">
    <text evidence="11">Belongs to the SNF2/RAD54 helicase family.</text>
</comment>
<evidence type="ECO:0000250" key="1"/>
<evidence type="ECO:0000250" key="2">
    <source>
        <dbReference type="UniProtKB" id="Q9Y4B4"/>
    </source>
</evidence>
<evidence type="ECO:0000255" key="3">
    <source>
        <dbReference type="PROSITE-ProRule" id="PRU00541"/>
    </source>
</evidence>
<evidence type="ECO:0000255" key="4">
    <source>
        <dbReference type="PROSITE-ProRule" id="PRU00542"/>
    </source>
</evidence>
<evidence type="ECO:0000256" key="5">
    <source>
        <dbReference type="SAM" id="MobiDB-lite"/>
    </source>
</evidence>
<evidence type="ECO:0000269" key="6">
    <source>
    </source>
</evidence>
<evidence type="ECO:0000269" key="7">
    <source>
    </source>
</evidence>
<evidence type="ECO:0000269" key="8">
    <source>
    </source>
</evidence>
<evidence type="ECO:0000269" key="9">
    <source>
    </source>
</evidence>
<evidence type="ECO:0000269" key="10">
    <source>
    </source>
</evidence>
<evidence type="ECO:0000305" key="11"/>
<evidence type="ECO:0007744" key="12">
    <source>
    </source>
</evidence>
<name>ARIP4_MOUSE</name>
<keyword id="KW-0067">ATP-binding</keyword>
<keyword id="KW-0238">DNA-binding</keyword>
<keyword id="KW-0347">Helicase</keyword>
<keyword id="KW-0378">Hydrolase</keyword>
<keyword id="KW-1017">Isopeptide bond</keyword>
<keyword id="KW-0547">Nucleotide-binding</keyword>
<keyword id="KW-0539">Nucleus</keyword>
<keyword id="KW-0597">Phosphoprotein</keyword>
<keyword id="KW-1185">Reference proteome</keyword>
<keyword id="KW-0677">Repeat</keyword>
<keyword id="KW-0832">Ubl conjugation</keyword>
<feature type="chain" id="PRO_0000315782" description="Helicase ARIP4">
    <location>
        <begin position="1"/>
        <end position="1466"/>
    </location>
</feature>
<feature type="domain" description="Helicase ATP-binding" evidence="3">
    <location>
        <begin position="291"/>
        <end position="511"/>
    </location>
</feature>
<feature type="domain" description="Helicase C-terminal" evidence="4">
    <location>
        <begin position="727"/>
        <end position="895"/>
    </location>
</feature>
<feature type="region of interest" description="Disordered" evidence="5">
    <location>
        <begin position="1"/>
        <end position="137"/>
    </location>
</feature>
<feature type="region of interest" description="Disordered" evidence="5">
    <location>
        <begin position="185"/>
        <end position="235"/>
    </location>
</feature>
<feature type="region of interest" description="Disordered" evidence="5">
    <location>
        <begin position="649"/>
        <end position="670"/>
    </location>
</feature>
<feature type="region of interest" description="Disordered" evidence="5">
    <location>
        <begin position="1026"/>
        <end position="1045"/>
    </location>
</feature>
<feature type="region of interest" description="Disordered" evidence="5">
    <location>
        <begin position="1120"/>
        <end position="1170"/>
    </location>
</feature>
<feature type="region of interest" description="Disordered" evidence="5">
    <location>
        <begin position="1184"/>
        <end position="1212"/>
    </location>
</feature>
<feature type="region of interest" description="Disordered" evidence="5">
    <location>
        <begin position="1259"/>
        <end position="1281"/>
    </location>
</feature>
<feature type="region of interest" description="Disordered" evidence="5">
    <location>
        <begin position="1444"/>
        <end position="1466"/>
    </location>
</feature>
<feature type="short sequence motif" description="DEAH box">
    <location>
        <begin position="462"/>
        <end position="465"/>
    </location>
</feature>
<feature type="short sequence motif" description="LXXLL motif 1">
    <location>
        <begin position="550"/>
        <end position="554"/>
    </location>
</feature>
<feature type="short sequence motif" description="LXXLL motif 2">
    <location>
        <begin position="1328"/>
        <end position="1332"/>
    </location>
</feature>
<feature type="compositionally biased region" description="Acidic residues" evidence="5">
    <location>
        <begin position="11"/>
        <end position="49"/>
    </location>
</feature>
<feature type="compositionally biased region" description="Low complexity" evidence="5">
    <location>
        <begin position="72"/>
        <end position="82"/>
    </location>
</feature>
<feature type="compositionally biased region" description="Basic residues" evidence="5">
    <location>
        <begin position="99"/>
        <end position="114"/>
    </location>
</feature>
<feature type="compositionally biased region" description="Basic and acidic residues" evidence="5">
    <location>
        <begin position="191"/>
        <end position="200"/>
    </location>
</feature>
<feature type="compositionally biased region" description="Polar residues" evidence="5">
    <location>
        <begin position="1135"/>
        <end position="1154"/>
    </location>
</feature>
<feature type="compositionally biased region" description="Acidic residues" evidence="5">
    <location>
        <begin position="1451"/>
        <end position="1466"/>
    </location>
</feature>
<feature type="binding site" evidence="11">
    <location>
        <begin position="304"/>
        <end position="311"/>
    </location>
    <ligand>
        <name>ATP</name>
        <dbReference type="ChEBI" id="CHEBI:30616"/>
    </ligand>
</feature>
<feature type="modified residue" description="Phosphoserine" evidence="12">
    <location>
        <position position="1168"/>
    </location>
</feature>
<feature type="modified residue" description="Phosphoserine" evidence="12">
    <location>
        <position position="1171"/>
    </location>
</feature>
<feature type="modified residue" description="Phosphothreonine" evidence="2">
    <location>
        <position position="1259"/>
    </location>
</feature>
<feature type="cross-link" description="Glycyl lysine isopeptide (Lys-Gly) (interchain with G-Cter in SUMO2)" evidence="2">
    <location>
        <position position="114"/>
    </location>
</feature>
<feature type="cross-link" description="Glycyl lysine isopeptide (Lys-Gly) (interchain with G-Cter in SUMO2)" evidence="2">
    <location>
        <position position="126"/>
    </location>
</feature>
<feature type="cross-link" description="Glycyl lysine isopeptide (Lys-Gly) (interchain with G-Cter in SUMO2)" evidence="2">
    <location>
        <position position="271"/>
    </location>
</feature>
<feature type="cross-link" description="Glycyl lysine isopeptide (Lys-Gly) (interchain with G-Cter in SUMO2)" evidence="2">
    <location>
        <position position="664"/>
    </location>
</feature>
<feature type="cross-link" description="Glycyl lysine isopeptide (Lys-Gly) (interchain with G-Cter in SUMO2)" evidence="2">
    <location>
        <position position="681"/>
    </location>
</feature>
<feature type="cross-link" description="Glycyl lysine isopeptide (Lys-Gly) (interchain with G-Cter in SUMO2)" evidence="2">
    <location>
        <position position="758"/>
    </location>
</feature>
<feature type="cross-link" description="Glycyl lysine isopeptide (Lys-Gly) (interchain with G-Cter in SUMO2)" evidence="2">
    <location>
        <position position="900"/>
    </location>
</feature>
<feature type="cross-link" description="Glycyl lysine isopeptide (Lys-Gly) (interchain with G-Cter in SUMO2)" evidence="2">
    <location>
        <position position="1013"/>
    </location>
</feature>
<feature type="cross-link" description="Glycyl lysine isopeptide (Lys-Gly) (interchain with G-Cter in SUMO2)" evidence="2">
    <location>
        <position position="1017"/>
    </location>
</feature>
<feature type="mutagenesis site" description="Abolishes ATP-binding." evidence="6">
    <original>K</original>
    <variation>A</variation>
    <location>
        <position position="310"/>
    </location>
</feature>
<feature type="mutagenesis site" description="Decreased sumoylation; when associated with E-573; E-664; E-935; E-961 and E-1013." evidence="8">
    <original>K</original>
    <variation>E</variation>
    <location>
        <position position="361"/>
    </location>
</feature>
<feature type="mutagenesis site" description="Abolishes ATPase activity." evidence="6">
    <original>DE</original>
    <variation>AA</variation>
    <location>
        <begin position="462"/>
        <end position="463"/>
    </location>
</feature>
<feature type="mutagenesis site" description="Decreased sumoylation; when associated with E-361; E-664; E-935; E-961 and E-1013." evidence="8">
    <original>K</original>
    <variation>E</variation>
    <location>
        <position position="573"/>
    </location>
</feature>
<feature type="mutagenesis site" description="Decreased sumoylation; when associated with E-361; E-573; E-935; E-961 and E-1013." evidence="8">
    <original>K</original>
    <variation>E</variation>
    <location>
        <position position="664"/>
    </location>
</feature>
<feature type="mutagenesis site" description="Decreased sumoylation; when associated with E-361; E-573; E-664; E-961 and E-1013." evidence="8">
    <original>K</original>
    <variation>E</variation>
    <location>
        <position position="935"/>
    </location>
</feature>
<feature type="mutagenesis site" description="Decreased sumoylation; when associated with E-361; E-573; E-664; E-935 and E-1013." evidence="8">
    <original>K</original>
    <variation>E</variation>
    <location>
        <position position="961"/>
    </location>
</feature>
<feature type="mutagenesis site" description="Decreased sumoylation; when associated with E-361; E-573; E-664; E-935 and E-961." evidence="8">
    <original>K</original>
    <variation>E</variation>
    <location>
        <position position="1013"/>
    </location>
</feature>
<feature type="sequence conflict" description="In Ref. 3; BAE25404." evidence="11" ref="3">
    <original>I</original>
    <variation>V</variation>
    <location>
        <position position="1197"/>
    </location>
</feature>
<feature type="sequence conflict" description="In Ref. 3; BAE25404." evidence="11" ref="3">
    <original>I</original>
    <variation>V</variation>
    <location>
        <position position="1267"/>
    </location>
</feature>
<accession>Q99NG0</accession>
<accession>Q3UPJ1</accession>
<protein>
    <recommendedName>
        <fullName>Helicase ARIP4</fullName>
        <ecNumber>3.6.4.12</ecNumber>
    </recommendedName>
    <alternativeName>
        <fullName>Androgen receptor-interacting protein 4</fullName>
    </alternativeName>
    <alternativeName>
        <fullName>RAD54-like protein 2</fullName>
    </alternativeName>
    <alternativeName>
        <fullName>Steroid receptor-interacting SNF2 domain-containing protein-like</fullName>
    </alternativeName>
</protein>
<reference key="1">
    <citation type="journal article" date="2002" name="Mol. Biol. Cell">
        <title>Novel ATPase of SNF2-like protein family interacts with androgen receptor and modulates androgen-dependent transcription.</title>
        <authorList>
            <person name="Rouleau N."/>
            <person name="Domans'kyi A."/>
            <person name="Reeben M."/>
            <person name="Moilanen A.-M."/>
            <person name="Havas K."/>
            <person name="Kang Z."/>
            <person name="Owen-Hughes T."/>
            <person name="Palvimo J.J."/>
            <person name="Jaenne O.A."/>
        </authorList>
    </citation>
    <scope>NUCLEOTIDE SEQUENCE [MRNA]</scope>
    <scope>FUNCTION</scope>
    <scope>SUBCELLULAR LOCATION</scope>
    <scope>DNA-BINDING</scope>
    <scope>INTERACTION WITH AR</scope>
    <scope>MUTAGENESIS OF LYS-310 AND 462-ASP-GLU-463</scope>
    <source>
        <strain>Swiss Webster</strain>
        <tissue>Embryo</tissue>
    </source>
</reference>
<reference key="2">
    <citation type="journal article" date="2004" name="Genome Res.">
        <title>The status, quality, and expansion of the NIH full-length cDNA project: the Mammalian Gene Collection (MGC).</title>
        <authorList>
            <consortium name="The MGC Project Team"/>
        </authorList>
    </citation>
    <scope>NUCLEOTIDE SEQUENCE [LARGE SCALE MRNA]</scope>
</reference>
<reference key="3">
    <citation type="journal article" date="2005" name="Science">
        <title>The transcriptional landscape of the mammalian genome.</title>
        <authorList>
            <person name="Carninci P."/>
            <person name="Kasukawa T."/>
            <person name="Katayama S."/>
            <person name="Gough J."/>
            <person name="Frith M.C."/>
            <person name="Maeda N."/>
            <person name="Oyama R."/>
            <person name="Ravasi T."/>
            <person name="Lenhard B."/>
            <person name="Wells C."/>
            <person name="Kodzius R."/>
            <person name="Shimokawa K."/>
            <person name="Bajic V.B."/>
            <person name="Brenner S.E."/>
            <person name="Batalov S."/>
            <person name="Forrest A.R."/>
            <person name="Zavolan M."/>
            <person name="Davis M.J."/>
            <person name="Wilming L.G."/>
            <person name="Aidinis V."/>
            <person name="Allen J.E."/>
            <person name="Ambesi-Impiombato A."/>
            <person name="Apweiler R."/>
            <person name="Aturaliya R.N."/>
            <person name="Bailey T.L."/>
            <person name="Bansal M."/>
            <person name="Baxter L."/>
            <person name="Beisel K.W."/>
            <person name="Bersano T."/>
            <person name="Bono H."/>
            <person name="Chalk A.M."/>
            <person name="Chiu K.P."/>
            <person name="Choudhary V."/>
            <person name="Christoffels A."/>
            <person name="Clutterbuck D.R."/>
            <person name="Crowe M.L."/>
            <person name="Dalla E."/>
            <person name="Dalrymple B.P."/>
            <person name="de Bono B."/>
            <person name="Della Gatta G."/>
            <person name="di Bernardo D."/>
            <person name="Down T."/>
            <person name="Engstrom P."/>
            <person name="Fagiolini M."/>
            <person name="Faulkner G."/>
            <person name="Fletcher C.F."/>
            <person name="Fukushima T."/>
            <person name="Furuno M."/>
            <person name="Futaki S."/>
            <person name="Gariboldi M."/>
            <person name="Georgii-Hemming P."/>
            <person name="Gingeras T.R."/>
            <person name="Gojobori T."/>
            <person name="Green R.E."/>
            <person name="Gustincich S."/>
            <person name="Harbers M."/>
            <person name="Hayashi Y."/>
            <person name="Hensch T.K."/>
            <person name="Hirokawa N."/>
            <person name="Hill D."/>
            <person name="Huminiecki L."/>
            <person name="Iacono M."/>
            <person name="Ikeo K."/>
            <person name="Iwama A."/>
            <person name="Ishikawa T."/>
            <person name="Jakt M."/>
            <person name="Kanapin A."/>
            <person name="Katoh M."/>
            <person name="Kawasawa Y."/>
            <person name="Kelso J."/>
            <person name="Kitamura H."/>
            <person name="Kitano H."/>
            <person name="Kollias G."/>
            <person name="Krishnan S.P."/>
            <person name="Kruger A."/>
            <person name="Kummerfeld S.K."/>
            <person name="Kurochkin I.V."/>
            <person name="Lareau L.F."/>
            <person name="Lazarevic D."/>
            <person name="Lipovich L."/>
            <person name="Liu J."/>
            <person name="Liuni S."/>
            <person name="McWilliam S."/>
            <person name="Madan Babu M."/>
            <person name="Madera M."/>
            <person name="Marchionni L."/>
            <person name="Matsuda H."/>
            <person name="Matsuzawa S."/>
            <person name="Miki H."/>
            <person name="Mignone F."/>
            <person name="Miyake S."/>
            <person name="Morris K."/>
            <person name="Mottagui-Tabar S."/>
            <person name="Mulder N."/>
            <person name="Nakano N."/>
            <person name="Nakauchi H."/>
            <person name="Ng P."/>
            <person name="Nilsson R."/>
            <person name="Nishiguchi S."/>
            <person name="Nishikawa S."/>
            <person name="Nori F."/>
            <person name="Ohara O."/>
            <person name="Okazaki Y."/>
            <person name="Orlando V."/>
            <person name="Pang K.C."/>
            <person name="Pavan W.J."/>
            <person name="Pavesi G."/>
            <person name="Pesole G."/>
            <person name="Petrovsky N."/>
            <person name="Piazza S."/>
            <person name="Reed J."/>
            <person name="Reid J.F."/>
            <person name="Ring B.Z."/>
            <person name="Ringwald M."/>
            <person name="Rost B."/>
            <person name="Ruan Y."/>
            <person name="Salzberg S.L."/>
            <person name="Sandelin A."/>
            <person name="Schneider C."/>
            <person name="Schoenbach C."/>
            <person name="Sekiguchi K."/>
            <person name="Semple C.A."/>
            <person name="Seno S."/>
            <person name="Sessa L."/>
            <person name="Sheng Y."/>
            <person name="Shibata Y."/>
            <person name="Shimada H."/>
            <person name="Shimada K."/>
            <person name="Silva D."/>
            <person name="Sinclair B."/>
            <person name="Sperling S."/>
            <person name="Stupka E."/>
            <person name="Sugiura K."/>
            <person name="Sultana R."/>
            <person name="Takenaka Y."/>
            <person name="Taki K."/>
            <person name="Tammoja K."/>
            <person name="Tan S.L."/>
            <person name="Tang S."/>
            <person name="Taylor M.S."/>
            <person name="Tegner J."/>
            <person name="Teichmann S.A."/>
            <person name="Ueda H.R."/>
            <person name="van Nimwegen E."/>
            <person name="Verardo R."/>
            <person name="Wei C.L."/>
            <person name="Yagi K."/>
            <person name="Yamanishi H."/>
            <person name="Zabarovsky E."/>
            <person name="Zhu S."/>
            <person name="Zimmer A."/>
            <person name="Hide W."/>
            <person name="Bult C."/>
            <person name="Grimmond S.M."/>
            <person name="Teasdale R.D."/>
            <person name="Liu E.T."/>
            <person name="Brusic V."/>
            <person name="Quackenbush J."/>
            <person name="Wahlestedt C."/>
            <person name="Mattick J.S."/>
            <person name="Hume D.A."/>
            <person name="Kai C."/>
            <person name="Sasaki D."/>
            <person name="Tomaru Y."/>
            <person name="Fukuda S."/>
            <person name="Kanamori-Katayama M."/>
            <person name="Suzuki M."/>
            <person name="Aoki J."/>
            <person name="Arakawa T."/>
            <person name="Iida J."/>
            <person name="Imamura K."/>
            <person name="Itoh M."/>
            <person name="Kato T."/>
            <person name="Kawaji H."/>
            <person name="Kawagashira N."/>
            <person name="Kawashima T."/>
            <person name="Kojima M."/>
            <person name="Kondo S."/>
            <person name="Konno H."/>
            <person name="Nakano K."/>
            <person name="Ninomiya N."/>
            <person name="Nishio T."/>
            <person name="Okada M."/>
            <person name="Plessy C."/>
            <person name="Shibata K."/>
            <person name="Shiraki T."/>
            <person name="Suzuki S."/>
            <person name="Tagami M."/>
            <person name="Waki K."/>
            <person name="Watahiki A."/>
            <person name="Okamura-Oho Y."/>
            <person name="Suzuki H."/>
            <person name="Kawai J."/>
            <person name="Hayashizaki Y."/>
        </authorList>
    </citation>
    <scope>NUCLEOTIDE SEQUENCE [LARGE SCALE MRNA] OF 33-1466</scope>
    <source>
        <strain>C57BL/6J</strain>
    </source>
</reference>
<reference key="4">
    <citation type="journal article" date="2004" name="Mol. Cell. Biol.">
        <title>Dyrk1A potentiates steroid hormone-induced transcription via the chromatin remodeling factor Arip4.</title>
        <authorList>
            <person name="Sitz J.H."/>
            <person name="Tigges M."/>
            <person name="Baumgaertel K."/>
            <person name="Khaspekov L.G."/>
            <person name="Lutz B."/>
        </authorList>
    </citation>
    <scope>SUBCELLULAR LOCATION</scope>
    <scope>TISSUE SPECIFICITY</scope>
    <scope>INTERACTION WITH DYRK1A</scope>
</reference>
<reference key="5">
    <citation type="journal article" date="2006" name="Biochem. J.">
        <title>Biochemical characterization of androgen receptor-interacting protein 4.</title>
        <authorList>
            <person name="Domanskyi A."/>
            <person name="Virtanen K.T."/>
            <person name="Palvimo J.J."/>
            <person name="Jaenne O.A."/>
        </authorList>
    </citation>
    <scope>FUNCTION</scope>
    <scope>BIOPHYSICOCHEMICAL PROPERTIES</scope>
    <scope>ACTIVITY REGULATION</scope>
    <scope>INTERACTION WITH AR</scope>
    <scope>SUMOYLATION</scope>
    <scope>MUTAGENESIS OF LYS-361; LYS-573; LYS-664; LYS-935; LYS-961 AND LYS-1013</scope>
</reference>
<reference key="6">
    <citation type="journal article" date="2007" name="Am. J. Physiol.">
        <title>Expression and localization of androgen receptor-interacting protein-4 in the testis.</title>
        <authorList>
            <person name="Domanskyi A."/>
            <person name="Zhang F.-P."/>
            <person name="Nurmio M."/>
            <person name="Palvimo J.J."/>
            <person name="Toppari J."/>
            <person name="Jaenne O.A."/>
        </authorList>
    </citation>
    <scope>TISSUE SPECIFICITY</scope>
    <scope>DEVELOPMENTAL STAGE</scope>
</reference>
<reference key="7">
    <citation type="journal article" date="2007" name="Mol. Endocrinol.">
        <title>An adenosine triphosphatase of the sucrose nonfermenting 2 family, androgen receptor-interacting protein 4, is essential for mouse embryonic development and cell proliferation.</title>
        <authorList>
            <person name="Zhang F.-P."/>
            <person name="Domanskyi A."/>
            <person name="Palvimo J.J."/>
            <person name="Sariola H."/>
            <person name="Partanen J."/>
            <person name="Jaenne O.A."/>
        </authorList>
    </citation>
    <scope>DEVELOPMENTAL STAGE</scope>
    <scope>DISRUPTION PHENOTYPE</scope>
</reference>
<reference key="8">
    <citation type="journal article" date="2010" name="Cell">
        <title>A tissue-specific atlas of mouse protein phosphorylation and expression.</title>
        <authorList>
            <person name="Huttlin E.L."/>
            <person name="Jedrychowski M.P."/>
            <person name="Elias J.E."/>
            <person name="Goswami T."/>
            <person name="Rad R."/>
            <person name="Beausoleil S.A."/>
            <person name="Villen J."/>
            <person name="Haas W."/>
            <person name="Sowa M.E."/>
            <person name="Gygi S.P."/>
        </authorList>
    </citation>
    <scope>PHOSPHORYLATION [LARGE SCALE ANALYSIS] AT SER-1168 AND SER-1171</scope>
    <scope>IDENTIFICATION BY MASS SPECTROMETRY [LARGE SCALE ANALYSIS]</scope>
    <source>
        <tissue>Kidney</tissue>
        <tissue>Liver</tissue>
        <tissue>Spleen</tissue>
        <tissue>Testis</tissue>
    </source>
</reference>
<dbReference type="EC" id="3.6.4.12"/>
<dbReference type="EMBL" id="AJ132389">
    <property type="protein sequence ID" value="CAC24703.1"/>
    <property type="molecule type" value="mRNA"/>
</dbReference>
<dbReference type="EMBL" id="BC133714">
    <property type="protein sequence ID" value="AAI33715.1"/>
    <property type="molecule type" value="mRNA"/>
</dbReference>
<dbReference type="EMBL" id="AK143506">
    <property type="protein sequence ID" value="BAE25404.1"/>
    <property type="molecule type" value="mRNA"/>
</dbReference>
<dbReference type="RefSeq" id="NP_109655.2">
    <property type="nucleotide sequence ID" value="NM_030730.2"/>
</dbReference>
<dbReference type="SMR" id="Q99NG0"/>
<dbReference type="BioGRID" id="219861">
    <property type="interactions" value="1"/>
</dbReference>
<dbReference type="FunCoup" id="Q99NG0">
    <property type="interactions" value="1662"/>
</dbReference>
<dbReference type="IntAct" id="Q99NG0">
    <property type="interactions" value="1"/>
</dbReference>
<dbReference type="STRING" id="10090.ENSMUSP00000045454"/>
<dbReference type="GlyGen" id="Q99NG0">
    <property type="glycosylation" value="5 sites, 1 O-linked glycan (5 sites)"/>
</dbReference>
<dbReference type="iPTMnet" id="Q99NG0"/>
<dbReference type="PhosphoSitePlus" id="Q99NG0"/>
<dbReference type="jPOST" id="Q99NG0"/>
<dbReference type="PaxDb" id="10090-ENSMUSP00000045454"/>
<dbReference type="ProteomicsDB" id="265099"/>
<dbReference type="Pumba" id="Q99NG0"/>
<dbReference type="DNASU" id="81000"/>
<dbReference type="GeneID" id="81000"/>
<dbReference type="KEGG" id="mmu:81000"/>
<dbReference type="AGR" id="MGI:1933196"/>
<dbReference type="CTD" id="23132"/>
<dbReference type="MGI" id="MGI:1933196">
    <property type="gene designation" value="Rad54l2"/>
</dbReference>
<dbReference type="eggNOG" id="KOG1016">
    <property type="taxonomic scope" value="Eukaryota"/>
</dbReference>
<dbReference type="InParanoid" id="Q99NG0"/>
<dbReference type="OrthoDB" id="9900844at2759"/>
<dbReference type="PhylomeDB" id="Q99NG0"/>
<dbReference type="BioGRID-ORCS" id="81000">
    <property type="hits" value="14 hits in 80 CRISPR screens"/>
</dbReference>
<dbReference type="ChiTaRS" id="Rad54l2">
    <property type="organism name" value="mouse"/>
</dbReference>
<dbReference type="PRO" id="PR:Q99NG0"/>
<dbReference type="Proteomes" id="UP000000589">
    <property type="component" value="Unplaced"/>
</dbReference>
<dbReference type="RNAct" id="Q99NG0">
    <property type="molecule type" value="protein"/>
</dbReference>
<dbReference type="GO" id="GO:0016607">
    <property type="term" value="C:nuclear speck"/>
    <property type="evidence" value="ECO:0000314"/>
    <property type="project" value="MGI"/>
</dbReference>
<dbReference type="GO" id="GO:0005634">
    <property type="term" value="C:nucleus"/>
    <property type="evidence" value="ECO:0000314"/>
    <property type="project" value="MGI"/>
</dbReference>
<dbReference type="GO" id="GO:0005524">
    <property type="term" value="F:ATP binding"/>
    <property type="evidence" value="ECO:0000314"/>
    <property type="project" value="MGI"/>
</dbReference>
<dbReference type="GO" id="GO:0016887">
    <property type="term" value="F:ATP hydrolysis activity"/>
    <property type="evidence" value="ECO:0000314"/>
    <property type="project" value="MGI"/>
</dbReference>
<dbReference type="GO" id="GO:0003677">
    <property type="term" value="F:DNA binding"/>
    <property type="evidence" value="ECO:0007669"/>
    <property type="project" value="UniProtKB-KW"/>
</dbReference>
<dbReference type="GO" id="GO:0004386">
    <property type="term" value="F:helicase activity"/>
    <property type="evidence" value="ECO:0007669"/>
    <property type="project" value="UniProtKB-KW"/>
</dbReference>
<dbReference type="GO" id="GO:0019901">
    <property type="term" value="F:protein kinase binding"/>
    <property type="evidence" value="ECO:0000353"/>
    <property type="project" value="MGI"/>
</dbReference>
<dbReference type="GO" id="GO:0003712">
    <property type="term" value="F:transcription coregulator activity"/>
    <property type="evidence" value="ECO:0000314"/>
    <property type="project" value="MGI"/>
</dbReference>
<dbReference type="GO" id="GO:0045944">
    <property type="term" value="P:positive regulation of transcription by RNA polymerase II"/>
    <property type="evidence" value="ECO:0000314"/>
    <property type="project" value="MGI"/>
</dbReference>
<dbReference type="CDD" id="cd18069">
    <property type="entry name" value="DEXHc_ARIP4"/>
    <property type="match status" value="1"/>
</dbReference>
<dbReference type="CDD" id="cd18793">
    <property type="entry name" value="SF2_C_SNF"/>
    <property type="match status" value="1"/>
</dbReference>
<dbReference type="FunFam" id="3.40.50.10810:FF:000032">
    <property type="entry name" value="Helicase ARIP4"/>
    <property type="match status" value="1"/>
</dbReference>
<dbReference type="FunFam" id="3.40.50.300:FF:000377">
    <property type="entry name" value="transcriptional regulator ATRX isoform X1"/>
    <property type="match status" value="1"/>
</dbReference>
<dbReference type="Gene3D" id="3.40.50.300">
    <property type="entry name" value="P-loop containing nucleotide triphosphate hydrolases"/>
    <property type="match status" value="1"/>
</dbReference>
<dbReference type="Gene3D" id="3.40.50.10810">
    <property type="entry name" value="Tandem AAA-ATPase domain"/>
    <property type="match status" value="1"/>
</dbReference>
<dbReference type="InterPro" id="IPR044574">
    <property type="entry name" value="ARIP4-like"/>
</dbReference>
<dbReference type="InterPro" id="IPR044573">
    <property type="entry name" value="ARIP4_DEXHc"/>
</dbReference>
<dbReference type="InterPro" id="IPR014001">
    <property type="entry name" value="Helicase_ATP-bd"/>
</dbReference>
<dbReference type="InterPro" id="IPR001650">
    <property type="entry name" value="Helicase_C-like"/>
</dbReference>
<dbReference type="InterPro" id="IPR027417">
    <property type="entry name" value="P-loop_NTPase"/>
</dbReference>
<dbReference type="InterPro" id="IPR038718">
    <property type="entry name" value="SNF2-like_sf"/>
</dbReference>
<dbReference type="InterPro" id="IPR049730">
    <property type="entry name" value="SNF2/RAD54-like_C"/>
</dbReference>
<dbReference type="InterPro" id="IPR000330">
    <property type="entry name" value="SNF2_N"/>
</dbReference>
<dbReference type="PANTHER" id="PTHR45797:SF1">
    <property type="entry name" value="HELICASE ARIP4"/>
    <property type="match status" value="1"/>
</dbReference>
<dbReference type="PANTHER" id="PTHR45797">
    <property type="entry name" value="RAD54-LIKE"/>
    <property type="match status" value="1"/>
</dbReference>
<dbReference type="Pfam" id="PF00271">
    <property type="entry name" value="Helicase_C"/>
    <property type="match status" value="1"/>
</dbReference>
<dbReference type="Pfam" id="PF00176">
    <property type="entry name" value="SNF2-rel_dom"/>
    <property type="match status" value="1"/>
</dbReference>
<dbReference type="SMART" id="SM00487">
    <property type="entry name" value="DEXDc"/>
    <property type="match status" value="1"/>
</dbReference>
<dbReference type="SMART" id="SM00490">
    <property type="entry name" value="HELICc"/>
    <property type="match status" value="1"/>
</dbReference>
<dbReference type="SUPFAM" id="SSF52540">
    <property type="entry name" value="P-loop containing nucleoside triphosphate hydrolases"/>
    <property type="match status" value="2"/>
</dbReference>
<dbReference type="PROSITE" id="PS51192">
    <property type="entry name" value="HELICASE_ATP_BIND_1"/>
    <property type="match status" value="1"/>
</dbReference>
<dbReference type="PROSITE" id="PS51194">
    <property type="entry name" value="HELICASE_CTER"/>
    <property type="match status" value="1"/>
</dbReference>
<sequence length="1466" mass="162540">MSDESASGSDPDLDPDVELEDEEEEEEEEEVAVEEHDRDDEEGLLDDTSLEGMCGTEHAQLGEDGQRPPRCTSTTSSQSEPSEQLRHQGKILASEDPKKKRAQKPSHMRRNIRKLLREDQLEPVTKAAQQEELERRKRLEQQRKEYAAPIPTVPLEFLPEEIVLRASDGPQLPPRVLAQEVICLDSSSGSEDEKSSRDEVIELSSGEEDTLHIVDSSESVSEEDEEEEKGGTHVNDALNQHDALGRVLVNLNHPPEEENVFLAPQLARAVKPHQIGGIRFLYDNLVESLERFKTSSGFGCILAHSMGLGKTLQVISFIDVLFRHTPAKTVLAIVPVNTLQNWLAEFNMWLPAPEALPADSKPEEVQPRFFKVHILNDEHKTVASRAKVTADWVSEGGVLLMGYEMYRLLTLKKSLATSRPKKTKKRSHPVIIDLDEEDRQQEFRREFEKALCRPGPDVVICDEGHRIKNCQASTSQALKNIRSRRRVVLTGYPLQNNLIEYWCMVDFVRPDFLGTRQEFSNMFERPILNGQCIDSTPQDVRLMRYRSHVLHSLLEGFVQRRGHTVLKIHLPAKEENVILVRLSQIQRDLYTQFMDRFRDCGTSGWLGLNPLKAFCVCCKIWNHPDVLYEALQKENLANEQDLDVEELGSAGTSARCPPHGTKVKGEDSALPSSMGEATNSKFLQGVGFNPFQERGNNIVTYEWAKELLTNYQTGVLENSPKMVLLFHLIEESVKLGDKILVFSQSLSTLALIEEFLGKRDMPCLPGAEGQGTQKWVRNVSYFRLDGSTPAFERERLINQFNDPSNLTTWLFLLSTRAGCLGVNLIGANRVVVFDASWNPCHDAQAVCRVYRYGQKKPCHIYRLVADYTLEKKIYDRQISKQGMSDRVVDDLNPMLNFTRKEVENLLHFVEKEPAPQTSLDIKGIKESVLQLACLKYPHLITKEPFEHESLLLNRKDHKLTKAEKKAAKKSYEEDKRTSVPYTRPSYAQYYPASDQSLTSIPAFSQRNWQPTLKGDEKPVASVRPVQSTPIPMMPRHVPLSGGVSSASSTNTSMNFPINYLQRAGVLVQKVVTTTDIVIPGLNSSTDVQARINAGESIHIIRGTKGTYIRTSDGRIFAVRATGKPKAPEDGRMAASGSQGPSLASTSNGRHSASSPKAPDPEGLARPVSPDSPEIISELQQYADVAAARESRQSSPSISAALPGPPGQLMDNSTIPGTALGTEPCLGGHCLNSSLLVTGQPSGGRHPVLDLRGHKRKLATPSVTQESIRRRSRKGHLPAPVQPYEHGYPVSGGFAMPPVSLNHNLTTPFTSQAGENSLFMGSNPSYYQLSNLLADARLVFPVTTDPLVPAGPVSSSSTATSVTASNPSFMLNPSVPGMLPSYSLPFSQPLLSEPRMFAPFPSPGLPSNLSRGVSVYPGYMSPHAGYPAGGLLRSQVPPFDSHEVAEVGFSSNDDEDKDDDVIEVTGK</sequence>
<proteinExistence type="evidence at protein level"/>